<comment type="similarity">
    <text evidence="1">Belongs to the UDP-glycosyltransferase family.</text>
</comment>
<sequence>MANVLMIGFPGEGHINPSIGVMKELKSRGENITYYAVKEYKEKITALDIEFREYHDFRGDYFGKNATGDEERDFTEMLCAFLKACKDIATHIYEEVKHESYDYVIYDHHLLAGKVIANMLKLPRFSLCTTFAMNEEFAKEMMGAYMKGSLEDSPHYESYQQLAETLNADFQAEIKKPFDVFLADGDLTIVFTSRGFQPLAEQFGERYVFVGPSITERAGNNDFPFDQIDNENVLFISMGTIFNNQKQFFNQCLEVCKDFDGKVVLSIGKHIKTSELNDIPENFIVRPYVPQLEILKRASLFVTHGGMNSTSEGLYFETPLVVIPMGGDQFVVADQVEKVGAGKVIKKEELSESLLKETIQEVMNNRSYAEKAKEIGQSLKAAGGSKKAADSILEAVKQKTQSANA</sequence>
<organism>
    <name type="scientific">Bacillus subtilis (strain 168)</name>
    <dbReference type="NCBI Taxonomy" id="224308"/>
    <lineage>
        <taxon>Bacteria</taxon>
        <taxon>Bacillati</taxon>
        <taxon>Bacillota</taxon>
        <taxon>Bacilli</taxon>
        <taxon>Bacillales</taxon>
        <taxon>Bacillaceae</taxon>
        <taxon>Bacillus</taxon>
    </lineage>
</organism>
<name>YOJK_BACSU</name>
<protein>
    <recommendedName>
        <fullName>Uncharacterized UDP-glucosyltransferase YojK</fullName>
        <ecNumber>2.4.1.-</ecNumber>
    </recommendedName>
</protein>
<dbReference type="EC" id="2.4.1.-"/>
<dbReference type="EMBL" id="AL009126">
    <property type="protein sequence ID" value="CAB13834.2"/>
    <property type="molecule type" value="Genomic_DNA"/>
</dbReference>
<dbReference type="PIR" id="H69906">
    <property type="entry name" value="H69906"/>
</dbReference>
<dbReference type="RefSeq" id="NP_389824.2">
    <property type="nucleotide sequence ID" value="NC_000964.3"/>
</dbReference>
<dbReference type="RefSeq" id="WP_004399256.1">
    <property type="nucleotide sequence ID" value="NZ_OZ025638.1"/>
</dbReference>
<dbReference type="PDB" id="7VM0">
    <property type="method" value="X-ray"/>
    <property type="resolution" value="1.90 A"/>
    <property type="chains" value="A/B=1-405"/>
</dbReference>
<dbReference type="PDB" id="8H5D">
    <property type="method" value="X-ray"/>
    <property type="resolution" value="2.50 A"/>
    <property type="chains" value="A/B=1-405"/>
</dbReference>
<dbReference type="PDBsum" id="7VM0"/>
<dbReference type="PDBsum" id="8H5D"/>
<dbReference type="SMR" id="O31853"/>
<dbReference type="FunCoup" id="O31853">
    <property type="interactions" value="21"/>
</dbReference>
<dbReference type="STRING" id="224308.BSU19420"/>
<dbReference type="CAZy" id="GT1">
    <property type="family name" value="Glycosyltransferase Family 1"/>
</dbReference>
<dbReference type="PaxDb" id="224308-BSU19420"/>
<dbReference type="DNASU" id="939457"/>
<dbReference type="EnsemblBacteria" id="CAB13834">
    <property type="protein sequence ID" value="CAB13834"/>
    <property type="gene ID" value="BSU_19420"/>
</dbReference>
<dbReference type="GeneID" id="939457"/>
<dbReference type="KEGG" id="bsu:BSU19420"/>
<dbReference type="PATRIC" id="fig|224308.179.peg.2123"/>
<dbReference type="eggNOG" id="COG1819">
    <property type="taxonomic scope" value="Bacteria"/>
</dbReference>
<dbReference type="InParanoid" id="O31853"/>
<dbReference type="OrthoDB" id="6620093at2"/>
<dbReference type="PhylomeDB" id="O31853"/>
<dbReference type="BioCyc" id="BSUB:BSU19420-MONOMER"/>
<dbReference type="Proteomes" id="UP000001570">
    <property type="component" value="Chromosome"/>
</dbReference>
<dbReference type="GO" id="GO:0016758">
    <property type="term" value="F:hexosyltransferase activity"/>
    <property type="evidence" value="ECO:0007669"/>
    <property type="project" value="InterPro"/>
</dbReference>
<dbReference type="GO" id="GO:0008194">
    <property type="term" value="F:UDP-glycosyltransferase activity"/>
    <property type="evidence" value="ECO:0007669"/>
    <property type="project" value="InterPro"/>
</dbReference>
<dbReference type="CDD" id="cd03784">
    <property type="entry name" value="GT1_Gtf-like"/>
    <property type="match status" value="1"/>
</dbReference>
<dbReference type="FunFam" id="3.40.50.2000:FF:000072">
    <property type="entry name" value="Glycosyl transferase"/>
    <property type="match status" value="1"/>
</dbReference>
<dbReference type="Gene3D" id="3.40.50.2000">
    <property type="entry name" value="Glycogen Phosphorylase B"/>
    <property type="match status" value="2"/>
</dbReference>
<dbReference type="InterPro" id="IPR010610">
    <property type="entry name" value="EryCIII-like_C"/>
</dbReference>
<dbReference type="InterPro" id="IPR050271">
    <property type="entry name" value="UDP-glycosyltransferase"/>
</dbReference>
<dbReference type="InterPro" id="IPR002213">
    <property type="entry name" value="UDP_glucos_trans"/>
</dbReference>
<dbReference type="InterPro" id="IPR006326">
    <property type="entry name" value="UDPGT_MGT-like"/>
</dbReference>
<dbReference type="NCBIfam" id="TIGR01426">
    <property type="entry name" value="MGT"/>
    <property type="match status" value="1"/>
</dbReference>
<dbReference type="PANTHER" id="PTHR48043">
    <property type="entry name" value="EG:EG0003.4 PROTEIN-RELATED"/>
    <property type="match status" value="1"/>
</dbReference>
<dbReference type="PANTHER" id="PTHR48043:SF145">
    <property type="entry name" value="FI06409P-RELATED"/>
    <property type="match status" value="1"/>
</dbReference>
<dbReference type="Pfam" id="PF06722">
    <property type="entry name" value="EryCIII-like_C"/>
    <property type="match status" value="1"/>
</dbReference>
<dbReference type="SUPFAM" id="SSF53756">
    <property type="entry name" value="UDP-Glycosyltransferase/glycogen phosphorylase"/>
    <property type="match status" value="1"/>
</dbReference>
<keyword id="KW-0002">3D-structure</keyword>
<keyword id="KW-0328">Glycosyltransferase</keyword>
<keyword id="KW-1185">Reference proteome</keyword>
<keyword id="KW-0808">Transferase</keyword>
<reference key="1">
    <citation type="journal article" date="1997" name="Nature">
        <title>The complete genome sequence of the Gram-positive bacterium Bacillus subtilis.</title>
        <authorList>
            <person name="Kunst F."/>
            <person name="Ogasawara N."/>
            <person name="Moszer I."/>
            <person name="Albertini A.M."/>
            <person name="Alloni G."/>
            <person name="Azevedo V."/>
            <person name="Bertero M.G."/>
            <person name="Bessieres P."/>
            <person name="Bolotin A."/>
            <person name="Borchert S."/>
            <person name="Borriss R."/>
            <person name="Boursier L."/>
            <person name="Brans A."/>
            <person name="Braun M."/>
            <person name="Brignell S.C."/>
            <person name="Bron S."/>
            <person name="Brouillet S."/>
            <person name="Bruschi C.V."/>
            <person name="Caldwell B."/>
            <person name="Capuano V."/>
            <person name="Carter N.M."/>
            <person name="Choi S.-K."/>
            <person name="Codani J.-J."/>
            <person name="Connerton I.F."/>
            <person name="Cummings N.J."/>
            <person name="Daniel R.A."/>
            <person name="Denizot F."/>
            <person name="Devine K.M."/>
            <person name="Duesterhoeft A."/>
            <person name="Ehrlich S.D."/>
            <person name="Emmerson P.T."/>
            <person name="Entian K.-D."/>
            <person name="Errington J."/>
            <person name="Fabret C."/>
            <person name="Ferrari E."/>
            <person name="Foulger D."/>
            <person name="Fritz C."/>
            <person name="Fujita M."/>
            <person name="Fujita Y."/>
            <person name="Fuma S."/>
            <person name="Galizzi A."/>
            <person name="Galleron N."/>
            <person name="Ghim S.-Y."/>
            <person name="Glaser P."/>
            <person name="Goffeau A."/>
            <person name="Golightly E.J."/>
            <person name="Grandi G."/>
            <person name="Guiseppi G."/>
            <person name="Guy B.J."/>
            <person name="Haga K."/>
            <person name="Haiech J."/>
            <person name="Harwood C.R."/>
            <person name="Henaut A."/>
            <person name="Hilbert H."/>
            <person name="Holsappel S."/>
            <person name="Hosono S."/>
            <person name="Hullo M.-F."/>
            <person name="Itaya M."/>
            <person name="Jones L.-M."/>
            <person name="Joris B."/>
            <person name="Karamata D."/>
            <person name="Kasahara Y."/>
            <person name="Klaerr-Blanchard M."/>
            <person name="Klein C."/>
            <person name="Kobayashi Y."/>
            <person name="Koetter P."/>
            <person name="Koningstein G."/>
            <person name="Krogh S."/>
            <person name="Kumano M."/>
            <person name="Kurita K."/>
            <person name="Lapidus A."/>
            <person name="Lardinois S."/>
            <person name="Lauber J."/>
            <person name="Lazarevic V."/>
            <person name="Lee S.-M."/>
            <person name="Levine A."/>
            <person name="Liu H."/>
            <person name="Masuda S."/>
            <person name="Mauel C."/>
            <person name="Medigue C."/>
            <person name="Medina N."/>
            <person name="Mellado R.P."/>
            <person name="Mizuno M."/>
            <person name="Moestl D."/>
            <person name="Nakai S."/>
            <person name="Noback M."/>
            <person name="Noone D."/>
            <person name="O'Reilly M."/>
            <person name="Ogawa K."/>
            <person name="Ogiwara A."/>
            <person name="Oudega B."/>
            <person name="Park S.-H."/>
            <person name="Parro V."/>
            <person name="Pohl T.M."/>
            <person name="Portetelle D."/>
            <person name="Porwollik S."/>
            <person name="Prescott A.M."/>
            <person name="Presecan E."/>
            <person name="Pujic P."/>
            <person name="Purnelle B."/>
            <person name="Rapoport G."/>
            <person name="Rey M."/>
            <person name="Reynolds S."/>
            <person name="Rieger M."/>
            <person name="Rivolta C."/>
            <person name="Rocha E."/>
            <person name="Roche B."/>
            <person name="Rose M."/>
            <person name="Sadaie Y."/>
            <person name="Sato T."/>
            <person name="Scanlan E."/>
            <person name="Schleich S."/>
            <person name="Schroeter R."/>
            <person name="Scoffone F."/>
            <person name="Sekiguchi J."/>
            <person name="Sekowska A."/>
            <person name="Seror S.J."/>
            <person name="Serror P."/>
            <person name="Shin B.-S."/>
            <person name="Soldo B."/>
            <person name="Sorokin A."/>
            <person name="Tacconi E."/>
            <person name="Takagi T."/>
            <person name="Takahashi H."/>
            <person name="Takemaru K."/>
            <person name="Takeuchi M."/>
            <person name="Tamakoshi A."/>
            <person name="Tanaka T."/>
            <person name="Terpstra P."/>
            <person name="Tognoni A."/>
            <person name="Tosato V."/>
            <person name="Uchiyama S."/>
            <person name="Vandenbol M."/>
            <person name="Vannier F."/>
            <person name="Vassarotti A."/>
            <person name="Viari A."/>
            <person name="Wambutt R."/>
            <person name="Wedler E."/>
            <person name="Wedler H."/>
            <person name="Weitzenegger T."/>
            <person name="Winters P."/>
            <person name="Wipat A."/>
            <person name="Yamamoto H."/>
            <person name="Yamane K."/>
            <person name="Yasumoto K."/>
            <person name="Yata K."/>
            <person name="Yoshida K."/>
            <person name="Yoshikawa H.-F."/>
            <person name="Zumstein E."/>
            <person name="Yoshikawa H."/>
            <person name="Danchin A."/>
        </authorList>
    </citation>
    <scope>NUCLEOTIDE SEQUENCE [LARGE SCALE GENOMIC DNA]</scope>
    <source>
        <strain>168</strain>
    </source>
</reference>
<reference key="2">
    <citation type="journal article" date="2009" name="Microbiology">
        <title>From a consortium sequence to a unified sequence: the Bacillus subtilis 168 reference genome a decade later.</title>
        <authorList>
            <person name="Barbe V."/>
            <person name="Cruveiller S."/>
            <person name="Kunst F."/>
            <person name="Lenoble P."/>
            <person name="Meurice G."/>
            <person name="Sekowska A."/>
            <person name="Vallenet D."/>
            <person name="Wang T."/>
            <person name="Moszer I."/>
            <person name="Medigue C."/>
            <person name="Danchin A."/>
        </authorList>
    </citation>
    <scope>SEQUENCE REVISION TO N-TERMINUS</scope>
</reference>
<proteinExistence type="evidence at protein level"/>
<feature type="chain" id="PRO_0000388723" description="Uncharacterized UDP-glucosyltransferase YojK">
    <location>
        <begin position="1"/>
        <end position="405"/>
    </location>
</feature>
<feature type="strand" evidence="2">
    <location>
        <begin position="3"/>
        <end position="7"/>
    </location>
</feature>
<feature type="helix" evidence="2">
    <location>
        <begin position="12"/>
        <end position="27"/>
    </location>
</feature>
<feature type="strand" evidence="2">
    <location>
        <begin position="31"/>
        <end position="36"/>
    </location>
</feature>
<feature type="helix" evidence="2">
    <location>
        <begin position="38"/>
        <end position="40"/>
    </location>
</feature>
<feature type="helix" evidence="2">
    <location>
        <begin position="41"/>
        <end position="45"/>
    </location>
</feature>
<feature type="turn" evidence="2">
    <location>
        <begin position="46"/>
        <end position="48"/>
    </location>
</feature>
<feature type="strand" evidence="2">
    <location>
        <begin position="50"/>
        <end position="53"/>
    </location>
</feature>
<feature type="helix" evidence="2">
    <location>
        <begin position="74"/>
        <end position="96"/>
    </location>
</feature>
<feature type="strand" evidence="2">
    <location>
        <begin position="102"/>
        <end position="107"/>
    </location>
</feature>
<feature type="helix" evidence="2">
    <location>
        <begin position="111"/>
        <end position="120"/>
    </location>
</feature>
<feature type="strand" evidence="2">
    <location>
        <begin position="124"/>
        <end position="128"/>
    </location>
</feature>
<feature type="helix" evidence="2">
    <location>
        <begin position="138"/>
        <end position="143"/>
    </location>
</feature>
<feature type="helix" evidence="2">
    <location>
        <begin position="156"/>
        <end position="170"/>
    </location>
</feature>
<feature type="helix" evidence="2">
    <location>
        <begin position="177"/>
        <end position="181"/>
    </location>
</feature>
<feature type="strand" evidence="2">
    <location>
        <begin position="186"/>
        <end position="192"/>
    </location>
</feature>
<feature type="turn" evidence="2">
    <location>
        <begin position="194"/>
        <end position="196"/>
    </location>
</feature>
<feature type="helix" evidence="2">
    <location>
        <begin position="200"/>
        <end position="202"/>
    </location>
</feature>
<feature type="strand" evidence="2">
    <location>
        <begin position="207"/>
        <end position="209"/>
    </location>
</feature>
<feature type="turn" evidence="2">
    <location>
        <begin position="219"/>
        <end position="221"/>
    </location>
</feature>
<feature type="helix" evidence="2">
    <location>
        <begin position="225"/>
        <end position="227"/>
    </location>
</feature>
<feature type="turn" evidence="2">
    <location>
        <begin position="228"/>
        <end position="230"/>
    </location>
</feature>
<feature type="strand" evidence="2">
    <location>
        <begin position="233"/>
        <end position="237"/>
    </location>
</feature>
<feature type="strand" evidence="2">
    <location>
        <begin position="240"/>
        <end position="242"/>
    </location>
</feature>
<feature type="helix" evidence="2">
    <location>
        <begin position="246"/>
        <end position="256"/>
    </location>
</feature>
<feature type="strand" evidence="2">
    <location>
        <begin position="260"/>
        <end position="266"/>
    </location>
</feature>
<feature type="strand" evidence="2">
    <location>
        <begin position="269"/>
        <end position="271"/>
    </location>
</feature>
<feature type="helix" evidence="2">
    <location>
        <begin position="273"/>
        <end position="275"/>
    </location>
</feature>
<feature type="strand" evidence="2">
    <location>
        <begin position="283"/>
        <end position="288"/>
    </location>
</feature>
<feature type="helix" evidence="2">
    <location>
        <begin position="291"/>
        <end position="297"/>
    </location>
</feature>
<feature type="strand" evidence="2">
    <location>
        <begin position="299"/>
        <end position="303"/>
    </location>
</feature>
<feature type="helix" evidence="2">
    <location>
        <begin position="307"/>
        <end position="315"/>
    </location>
</feature>
<feature type="strand" evidence="2">
    <location>
        <begin position="320"/>
        <end position="322"/>
    </location>
</feature>
<feature type="helix" evidence="2">
    <location>
        <begin position="329"/>
        <end position="338"/>
    </location>
</feature>
<feature type="strand" evidence="2">
    <location>
        <begin position="341"/>
        <end position="344"/>
    </location>
</feature>
<feature type="helix" evidence="2">
    <location>
        <begin position="347"/>
        <end position="349"/>
    </location>
</feature>
<feature type="helix" evidence="2">
    <location>
        <begin position="352"/>
        <end position="364"/>
    </location>
</feature>
<feature type="helix" evidence="2">
    <location>
        <begin position="366"/>
        <end position="381"/>
    </location>
</feature>
<feature type="helix" evidence="2">
    <location>
        <begin position="384"/>
        <end position="404"/>
    </location>
</feature>
<accession>O31853</accession>
<gene>
    <name type="primary">yojK</name>
    <name type="ordered locus">BSU19420</name>
</gene>
<evidence type="ECO:0000305" key="1"/>
<evidence type="ECO:0007829" key="2">
    <source>
        <dbReference type="PDB" id="7VM0"/>
    </source>
</evidence>